<evidence type="ECO:0000255" key="1"/>
<evidence type="ECO:0000305" key="2"/>
<keyword id="KW-0472">Membrane</keyword>
<keyword id="KW-1185">Reference proteome</keyword>
<keyword id="KW-0812">Transmembrane</keyword>
<keyword id="KW-1133">Transmembrane helix</keyword>
<gene>
    <name type="primary">srd-31</name>
    <name type="ORF">F07C4.8</name>
</gene>
<comment type="subcellular location">
    <subcellularLocation>
        <location evidence="2">Membrane</location>
        <topology evidence="2">Multi-pass membrane protein</topology>
    </subcellularLocation>
</comment>
<comment type="similarity">
    <text evidence="2">Belongs to the nematode receptor-like protein srd family.</text>
</comment>
<organism>
    <name type="scientific">Caenorhabditis elegans</name>
    <dbReference type="NCBI Taxonomy" id="6239"/>
    <lineage>
        <taxon>Eukaryota</taxon>
        <taxon>Metazoa</taxon>
        <taxon>Ecdysozoa</taxon>
        <taxon>Nematoda</taxon>
        <taxon>Chromadorea</taxon>
        <taxon>Rhabditida</taxon>
        <taxon>Rhabditina</taxon>
        <taxon>Rhabditomorpha</taxon>
        <taxon>Rhabditoidea</taxon>
        <taxon>Rhabditidae</taxon>
        <taxon>Peloderinae</taxon>
        <taxon>Caenorhabditis</taxon>
    </lineage>
</organism>
<reference key="1">
    <citation type="journal article" date="1998" name="Science">
        <title>Genome sequence of the nematode C. elegans: a platform for investigating biology.</title>
        <authorList>
            <consortium name="The C. elegans sequencing consortium"/>
        </authorList>
    </citation>
    <scope>NUCLEOTIDE SEQUENCE [LARGE SCALE GENOMIC DNA]</scope>
    <source>
        <strain>Bristol N2</strain>
    </source>
</reference>
<dbReference type="EMBL" id="FO080513">
    <property type="protein sequence ID" value="CCD64297.1"/>
    <property type="molecule type" value="Genomic_DNA"/>
</dbReference>
<dbReference type="PIR" id="T28942">
    <property type="entry name" value="T28942"/>
</dbReference>
<dbReference type="RefSeq" id="NP_504974.1">
    <property type="nucleotide sequence ID" value="NM_072573.1"/>
</dbReference>
<dbReference type="SMR" id="P91211"/>
<dbReference type="FunCoup" id="P91211">
    <property type="interactions" value="4"/>
</dbReference>
<dbReference type="PaxDb" id="6239-F07C4.8"/>
<dbReference type="EnsemblMetazoa" id="F07C4.8.1">
    <property type="protein sequence ID" value="F07C4.8.1"/>
    <property type="gene ID" value="WBGene00005109"/>
</dbReference>
<dbReference type="GeneID" id="191814"/>
<dbReference type="KEGG" id="cel:CELE_F07C4.8"/>
<dbReference type="UCSC" id="F07C4.8">
    <property type="organism name" value="c. elegans"/>
</dbReference>
<dbReference type="AGR" id="WB:WBGene00005109"/>
<dbReference type="CTD" id="191814"/>
<dbReference type="WormBase" id="F07C4.8">
    <property type="protein sequence ID" value="CE09207"/>
    <property type="gene ID" value="WBGene00005109"/>
    <property type="gene designation" value="srd-31"/>
</dbReference>
<dbReference type="eggNOG" id="ENOG502TJS3">
    <property type="taxonomic scope" value="Eukaryota"/>
</dbReference>
<dbReference type="GeneTree" id="ENSGT00970000195825"/>
<dbReference type="HOGENOM" id="CLU_057924_3_1_1"/>
<dbReference type="InParanoid" id="P91211"/>
<dbReference type="OrthoDB" id="5888683at2759"/>
<dbReference type="PhylomeDB" id="P91211"/>
<dbReference type="PRO" id="PR:P91211"/>
<dbReference type="Proteomes" id="UP000001940">
    <property type="component" value="Chromosome V"/>
</dbReference>
<dbReference type="GO" id="GO:0016020">
    <property type="term" value="C:membrane"/>
    <property type="evidence" value="ECO:0007669"/>
    <property type="project" value="UniProtKB-SubCell"/>
</dbReference>
<dbReference type="Gene3D" id="1.20.1070.10">
    <property type="entry name" value="Rhodopsin 7-helix transmembrane proteins"/>
    <property type="match status" value="1"/>
</dbReference>
<dbReference type="InterPro" id="IPR019421">
    <property type="entry name" value="7TM_GPCR_serpentine_rcpt_Srd"/>
</dbReference>
<dbReference type="InterPro" id="IPR050920">
    <property type="entry name" value="Nematode_rcpt-like_delta"/>
</dbReference>
<dbReference type="PANTHER" id="PTHR22945:SF9">
    <property type="entry name" value="SERPENTINE RECEPTOR, CLASS D (DELTA)-RELATED"/>
    <property type="match status" value="1"/>
</dbReference>
<dbReference type="PANTHER" id="PTHR22945">
    <property type="entry name" value="SERPENTINE RECEPTOR, CLASS D DELTA"/>
    <property type="match status" value="1"/>
</dbReference>
<dbReference type="Pfam" id="PF10317">
    <property type="entry name" value="7TM_GPCR_Srd"/>
    <property type="match status" value="1"/>
</dbReference>
<dbReference type="SUPFAM" id="SSF81321">
    <property type="entry name" value="Family A G protein-coupled receptor-like"/>
    <property type="match status" value="1"/>
</dbReference>
<sequence>MFYQVLHSILSLTAVLLNAFTMYLAITKSPKIMRPCSAIITIKTATDILTSIMSFFVMQRIITDGSTILVIPTGPCINFGKTACYVGHMLMLCFLEYNLIWMISSYIFRYYILYVRQPSIKKLVFVAFCLSIPSIIHMVVWFSIYDPNEASTYLPLFGSCDMVLSGKIVYWSAITLITQLFITAFLVIVAYIWIKETLCSYATKMGAIKKDVKNFNKRLVKVINFQVFLPSFIFLGVITFASMFTGKIGYEYAQYAISVIFMFSPIISPFSYILFVPHYKNVITGKVKNPKSKPTKCNPPISTTRSTGAPFVYNI</sequence>
<feature type="chain" id="PRO_0000104518" description="Serpentine receptor class delta-31">
    <location>
        <begin position="1"/>
        <end position="315"/>
    </location>
</feature>
<feature type="transmembrane region" description="Helical" evidence="1">
    <location>
        <begin position="6"/>
        <end position="26"/>
    </location>
</feature>
<feature type="transmembrane region" description="Helical" evidence="1">
    <location>
        <begin position="38"/>
        <end position="58"/>
    </location>
</feature>
<feature type="transmembrane region" description="Helical" evidence="1">
    <location>
        <begin position="83"/>
        <end position="103"/>
    </location>
</feature>
<feature type="transmembrane region" description="Helical" evidence="1">
    <location>
        <begin position="124"/>
        <end position="144"/>
    </location>
</feature>
<feature type="transmembrane region" description="Helical" evidence="1">
    <location>
        <begin position="174"/>
        <end position="194"/>
    </location>
</feature>
<feature type="transmembrane region" description="Helical" evidence="1">
    <location>
        <begin position="225"/>
        <end position="245"/>
    </location>
</feature>
<feature type="transmembrane region" description="Helical" evidence="1">
    <location>
        <begin position="256"/>
        <end position="276"/>
    </location>
</feature>
<name>SRD31_CAEEL</name>
<proteinExistence type="inferred from homology"/>
<protein>
    <recommendedName>
        <fullName>Serpentine receptor class delta-31</fullName>
        <shortName>Protein srd-31</shortName>
    </recommendedName>
</protein>
<accession>P91211</accession>